<dbReference type="EMBL" id="CP000668">
    <property type="protein sequence ID" value="ABP41181.1"/>
    <property type="molecule type" value="Genomic_DNA"/>
</dbReference>
<dbReference type="RefSeq" id="WP_002208668.1">
    <property type="nucleotide sequence ID" value="NZ_CP009715.1"/>
</dbReference>
<dbReference type="SMR" id="A4TPG9"/>
<dbReference type="GeneID" id="57975529"/>
<dbReference type="KEGG" id="ypp:YPDSF_2819"/>
<dbReference type="PATRIC" id="fig|386656.14.peg.77"/>
<dbReference type="GO" id="GO:0005524">
    <property type="term" value="F:ATP binding"/>
    <property type="evidence" value="ECO:0007669"/>
    <property type="project" value="UniProtKB-KW"/>
</dbReference>
<dbReference type="GO" id="GO:0003677">
    <property type="term" value="F:DNA binding"/>
    <property type="evidence" value="ECO:0007669"/>
    <property type="project" value="UniProtKB-KW"/>
</dbReference>
<dbReference type="GO" id="GO:0008270">
    <property type="term" value="F:zinc ion binding"/>
    <property type="evidence" value="ECO:0007669"/>
    <property type="project" value="UniProtKB-UniRule"/>
</dbReference>
<dbReference type="GO" id="GO:0045892">
    <property type="term" value="P:negative regulation of DNA-templated transcription"/>
    <property type="evidence" value="ECO:0007669"/>
    <property type="project" value="UniProtKB-UniRule"/>
</dbReference>
<dbReference type="HAMAP" id="MF_00440">
    <property type="entry name" value="NrdR"/>
    <property type="match status" value="1"/>
</dbReference>
<dbReference type="InterPro" id="IPR005144">
    <property type="entry name" value="ATP-cone_dom"/>
</dbReference>
<dbReference type="InterPro" id="IPR055173">
    <property type="entry name" value="NrdR-like_N"/>
</dbReference>
<dbReference type="InterPro" id="IPR003796">
    <property type="entry name" value="RNR_NrdR-like"/>
</dbReference>
<dbReference type="NCBIfam" id="TIGR00244">
    <property type="entry name" value="transcriptional regulator NrdR"/>
    <property type="match status" value="1"/>
</dbReference>
<dbReference type="PANTHER" id="PTHR30455">
    <property type="entry name" value="TRANSCRIPTIONAL REPRESSOR NRDR"/>
    <property type="match status" value="1"/>
</dbReference>
<dbReference type="PANTHER" id="PTHR30455:SF2">
    <property type="entry name" value="TRANSCRIPTIONAL REPRESSOR NRDR"/>
    <property type="match status" value="1"/>
</dbReference>
<dbReference type="Pfam" id="PF03477">
    <property type="entry name" value="ATP-cone"/>
    <property type="match status" value="1"/>
</dbReference>
<dbReference type="Pfam" id="PF22811">
    <property type="entry name" value="Zn_ribbon_NrdR"/>
    <property type="match status" value="1"/>
</dbReference>
<dbReference type="PROSITE" id="PS51161">
    <property type="entry name" value="ATP_CONE"/>
    <property type="match status" value="1"/>
</dbReference>
<protein>
    <recommendedName>
        <fullName evidence="1">Transcriptional repressor NrdR</fullName>
    </recommendedName>
</protein>
<feature type="chain" id="PRO_1000080857" description="Transcriptional repressor NrdR">
    <location>
        <begin position="1"/>
        <end position="149"/>
    </location>
</feature>
<feature type="domain" description="ATP-cone" evidence="1">
    <location>
        <begin position="49"/>
        <end position="139"/>
    </location>
</feature>
<feature type="zinc finger region" evidence="1">
    <location>
        <begin position="3"/>
        <end position="34"/>
    </location>
</feature>
<evidence type="ECO:0000255" key="1">
    <source>
        <dbReference type="HAMAP-Rule" id="MF_00440"/>
    </source>
</evidence>
<sequence length="149" mass="17205">MHCPFCAAVDTKVIDSRLVSDGSQVRRRRQCLDCNERFTTFEVAELVLPRVIKSDEVREPFNEEKLRRGMLKALEKRPVSSDDVETAISHIKSQLRATGEREVPTKMVGNLVMEALKRLDKVAYIRFASVYRSFEDVREFGEEIARLQD</sequence>
<comment type="function">
    <text evidence="1">Negatively regulates transcription of bacterial ribonucleotide reductase nrd genes and operons by binding to NrdR-boxes.</text>
</comment>
<comment type="cofactor">
    <cofactor evidence="1">
        <name>Zn(2+)</name>
        <dbReference type="ChEBI" id="CHEBI:29105"/>
    </cofactor>
    <text evidence="1">Binds 1 zinc ion.</text>
</comment>
<comment type="similarity">
    <text evidence="1">Belongs to the NrdR family.</text>
</comment>
<keyword id="KW-0067">ATP-binding</keyword>
<keyword id="KW-0238">DNA-binding</keyword>
<keyword id="KW-0479">Metal-binding</keyword>
<keyword id="KW-0547">Nucleotide-binding</keyword>
<keyword id="KW-0678">Repressor</keyword>
<keyword id="KW-0804">Transcription</keyword>
<keyword id="KW-0805">Transcription regulation</keyword>
<keyword id="KW-0862">Zinc</keyword>
<keyword id="KW-0863">Zinc-finger</keyword>
<gene>
    <name evidence="1" type="primary">nrdR</name>
    <name type="ordered locus">YPDSF_2819</name>
</gene>
<reference key="1">
    <citation type="submission" date="2007-02" db="EMBL/GenBank/DDBJ databases">
        <title>Complete sequence of chromosome of Yersinia pestis Pestoides F.</title>
        <authorList>
            <consortium name="US DOE Joint Genome Institute"/>
            <person name="Copeland A."/>
            <person name="Lucas S."/>
            <person name="Lapidus A."/>
            <person name="Barry K."/>
            <person name="Detter J.C."/>
            <person name="Glavina del Rio T."/>
            <person name="Hammon N."/>
            <person name="Israni S."/>
            <person name="Dalin E."/>
            <person name="Tice H."/>
            <person name="Pitluck S."/>
            <person name="Di Bartolo G."/>
            <person name="Chain P."/>
            <person name="Malfatti S."/>
            <person name="Shin M."/>
            <person name="Vergez L."/>
            <person name="Schmutz J."/>
            <person name="Larimer F."/>
            <person name="Land M."/>
            <person name="Hauser L."/>
            <person name="Worsham P."/>
            <person name="Chu M."/>
            <person name="Bearden S."/>
            <person name="Garcia E."/>
            <person name="Richardson P."/>
        </authorList>
    </citation>
    <scope>NUCLEOTIDE SEQUENCE [LARGE SCALE GENOMIC DNA]</scope>
    <source>
        <strain>Pestoides F</strain>
    </source>
</reference>
<accession>A4TPG9</accession>
<organism>
    <name type="scientific">Yersinia pestis (strain Pestoides F)</name>
    <dbReference type="NCBI Taxonomy" id="386656"/>
    <lineage>
        <taxon>Bacteria</taxon>
        <taxon>Pseudomonadati</taxon>
        <taxon>Pseudomonadota</taxon>
        <taxon>Gammaproteobacteria</taxon>
        <taxon>Enterobacterales</taxon>
        <taxon>Yersiniaceae</taxon>
        <taxon>Yersinia</taxon>
    </lineage>
</organism>
<proteinExistence type="inferred from homology"/>
<name>NRDR_YERPP</name>